<proteinExistence type="inferred from homology"/>
<keyword id="KW-0165">Cleavage on pair of basic residues</keyword>
<keyword id="KW-1015">Disulfide bond</keyword>
<keyword id="KW-0872">Ion channel impairing toxin</keyword>
<keyword id="KW-0528">Neurotoxin</keyword>
<keyword id="KW-0964">Secreted</keyword>
<keyword id="KW-0732">Signal</keyword>
<keyword id="KW-0800">Toxin</keyword>
<keyword id="KW-0738">Voltage-gated sodium channel impairing toxin</keyword>
<comment type="function">
    <text evidence="3 4">Mu-conotoxins block voltage-gated sodium channels (Nav). This toxin specifically inhibits mammalian Nav1.8/SCN10A sodium currents (IC(50)=2.11 uM) without inducing a shift in the current-voltage relationship of this channel (PubMed:32758497). In vivo, shows potent analgesic activity in a mice hotplate analgesic assay (PubMed:28219625). In addition, this toxin has better analgesic effects than Ziconotide, an analgesic drug (PubMed:28219625).</text>
</comment>
<comment type="subcellular location">
    <subcellularLocation>
        <location evidence="7 8">Secreted</location>
    </subcellularLocation>
</comment>
<comment type="tissue specificity">
    <text evidence="7 8">Expressed by the venom duct.</text>
</comment>
<comment type="domain">
    <text evidence="6">The cysteine framework is III (CC-C-C-CC). Classified in the M-4 branch, since 5 residues stand between the fourth and the fifth cysteine residues.</text>
</comment>
<comment type="miscellaneous">
    <text evidence="4">Negative results: has no effects (10 uM tested) on the human tetrodotoxin-sensitive Nav1.1/SCN1A, Nav1.2/SCN2A, Nav1.3/SCN3A, Nav1.4/SCN4A, Nav1.6/SCN8A and Nav1.7/SCN9A, as well as human tetrodotoxin-resistant Nav1.5/SCN7A.</text>
</comment>
<comment type="similarity">
    <text evidence="6">Belongs to the conotoxin M superfamily.</text>
</comment>
<organism>
    <name type="scientific">Conus tessulatus</name>
    <name type="common">Tessellate cone</name>
    <dbReference type="NCBI Taxonomy" id="101317"/>
    <lineage>
        <taxon>Eukaryota</taxon>
        <taxon>Metazoa</taxon>
        <taxon>Spiralia</taxon>
        <taxon>Lophotrochozoa</taxon>
        <taxon>Mollusca</taxon>
        <taxon>Gastropoda</taxon>
        <taxon>Caenogastropoda</taxon>
        <taxon>Neogastropoda</taxon>
        <taxon>Conoidea</taxon>
        <taxon>Conidae</taxon>
        <taxon>Conus</taxon>
        <taxon>Tesselliconus</taxon>
    </lineage>
</organism>
<evidence type="ECO:0000250" key="1">
    <source>
        <dbReference type="UniProtKB" id="P01523"/>
    </source>
</evidence>
<evidence type="ECO:0000255" key="2"/>
<evidence type="ECO:0000269" key="3">
    <source>
    </source>
</evidence>
<evidence type="ECO:0000269" key="4">
    <source>
    </source>
</evidence>
<evidence type="ECO:0000303" key="5">
    <source>
    </source>
</evidence>
<evidence type="ECO:0000305" key="6"/>
<evidence type="ECO:0000305" key="7">
    <source>
    </source>
</evidence>
<evidence type="ECO:0000305" key="8">
    <source>
    </source>
</evidence>
<evidence type="ECO:0000312" key="9">
    <source>
        <dbReference type="EMBL" id="AEX60400.1"/>
    </source>
</evidence>
<dbReference type="EMBL" id="JF510914">
    <property type="protein sequence ID" value="AEX60400.1"/>
    <property type="molecule type" value="mRNA"/>
</dbReference>
<dbReference type="GO" id="GO:0005576">
    <property type="term" value="C:extracellular region"/>
    <property type="evidence" value="ECO:0007669"/>
    <property type="project" value="UniProtKB-SubCell"/>
</dbReference>
<dbReference type="GO" id="GO:0008200">
    <property type="term" value="F:ion channel inhibitor activity"/>
    <property type="evidence" value="ECO:0007669"/>
    <property type="project" value="InterPro"/>
</dbReference>
<dbReference type="GO" id="GO:0017080">
    <property type="term" value="F:sodium channel regulator activity"/>
    <property type="evidence" value="ECO:0007669"/>
    <property type="project" value="UniProtKB-KW"/>
</dbReference>
<dbReference type="GO" id="GO:0090729">
    <property type="term" value="F:toxin activity"/>
    <property type="evidence" value="ECO:0007669"/>
    <property type="project" value="UniProtKB-KW"/>
</dbReference>
<dbReference type="InterPro" id="IPR004214">
    <property type="entry name" value="Conotoxin"/>
</dbReference>
<dbReference type="Pfam" id="PF02950">
    <property type="entry name" value="Conotoxin"/>
    <property type="match status" value="1"/>
</dbReference>
<sequence>MMSKLGVLLTICLLLFPLTAVPLDGDQPADQPAERKQNEQHPLFDQKRGCCRWPCPSRCGMARCCSS</sequence>
<name>CM3A_CONTS</name>
<protein>
    <recommendedName>
        <fullName evidence="5">Mu-conotoxin TsIIIA</fullName>
    </recommendedName>
</protein>
<feature type="signal peptide" evidence="2">
    <location>
        <begin position="1"/>
        <end position="20"/>
    </location>
</feature>
<feature type="propeptide" id="PRO_0000439628" evidence="8">
    <location>
        <begin position="21"/>
        <end position="48"/>
    </location>
</feature>
<feature type="peptide" id="PRO_5003560264" description="Mu-conotoxin TsIIIA" evidence="8">
    <location>
        <begin position="49"/>
        <end position="67"/>
    </location>
</feature>
<feature type="disulfide bond" evidence="1 8">
    <location>
        <begin position="50"/>
        <end position="59"/>
    </location>
</feature>
<feature type="disulfide bond" evidence="1 8">
    <location>
        <begin position="51"/>
        <end position="64"/>
    </location>
</feature>
<feature type="disulfide bond" evidence="1 8">
    <location>
        <begin position="55"/>
        <end position="65"/>
    </location>
</feature>
<accession>H2BKS9</accession>
<reference evidence="9" key="1">
    <citation type="journal article" date="2013" name="Toxicon">
        <title>Characterizing the evolution and functions of the M-superfamily conotoxins.</title>
        <authorList>
            <person name="Zhou M."/>
            <person name="Wang L."/>
            <person name="Wu Y."/>
            <person name="Zhu X."/>
            <person name="Feng Y."/>
            <person name="Chen Z."/>
            <person name="Li Y."/>
            <person name="Sun D."/>
            <person name="Ren Z."/>
            <person name="Xu A."/>
        </authorList>
    </citation>
    <scope>NUCLEOTIDE SEQUENCE [MRNA]</scope>
    <source>
        <tissue>Venom duct</tissue>
    </source>
</reference>
<reference key="2">
    <citation type="journal article" date="2017" name="Toxicon">
        <title>A novel mu-conotoxin from worm-hunting Conus tessulatus that selectively inhibit rat TTX-resistant sodium currents.</title>
        <authorList>
            <person name="Yang M."/>
            <person name="Zhao S."/>
            <person name="Min X."/>
            <person name="Shao M."/>
            <person name="Chen Y."/>
            <person name="Chen Z."/>
            <person name="Zhou M."/>
        </authorList>
    </citation>
    <scope>NUCLEOTIDE SEQUENCE [MRNA]</scope>
    <scope>FUNCTION</scope>
    <scope>SYNTHESIS OF 49-67</scope>
    <source>
        <tissue>Venom duct</tissue>
    </source>
</reference>
<reference key="3">
    <citation type="journal article" date="2020" name="Toxicon">
        <title>Mu-conotoxin TsIIIA, a peptide inhibitor of human voltage-gated sodium channel hNav1.8.</title>
        <authorList>
            <person name="Yang M."/>
            <person name="Zhou M."/>
        </authorList>
    </citation>
    <scope>FUNCTION</scope>
    <scope>SYNTHESIS OF 49-67</scope>
</reference>